<dbReference type="SMR" id="C0HL22"/>
<dbReference type="GO" id="GO:0006952">
    <property type="term" value="P:defense response"/>
    <property type="evidence" value="ECO:0007669"/>
    <property type="project" value="UniProtKB-KW"/>
</dbReference>
<dbReference type="InterPro" id="IPR005535">
    <property type="entry name" value="Cyclotide"/>
</dbReference>
<dbReference type="InterPro" id="IPR036146">
    <property type="entry name" value="Cyclotide_sf"/>
</dbReference>
<dbReference type="Pfam" id="PF03784">
    <property type="entry name" value="Cyclotide"/>
    <property type="match status" value="1"/>
</dbReference>
<dbReference type="SUPFAM" id="SSF57038">
    <property type="entry name" value="Cyclotides"/>
    <property type="match status" value="1"/>
</dbReference>
<organism>
    <name type="scientific">Psychotria brachyceras</name>
    <dbReference type="NCBI Taxonomy" id="980682"/>
    <lineage>
        <taxon>Eukaryota</taxon>
        <taxon>Viridiplantae</taxon>
        <taxon>Streptophyta</taxon>
        <taxon>Embryophyta</taxon>
        <taxon>Tracheophyta</taxon>
        <taxon>Spermatophyta</taxon>
        <taxon>Magnoliopsida</taxon>
        <taxon>eudicotyledons</taxon>
        <taxon>Gunneridae</taxon>
        <taxon>Pentapetalae</taxon>
        <taxon>asterids</taxon>
        <taxon>lamiids</taxon>
        <taxon>Gentianales</taxon>
        <taxon>Rubiaceae</taxon>
        <taxon>Rubioideae</taxon>
        <taxon>Psychotrieae</taxon>
        <taxon>Psychotria</taxon>
    </lineage>
</organism>
<proteinExistence type="evidence at protein level"/>
<comment type="function">
    <text evidence="1">Probably participates in a plant defense mechanism.</text>
</comment>
<comment type="domain">
    <text evidence="4">The presence of a 'disulfide through disulfide knot' structurally defines this protein as a knottin.</text>
</comment>
<comment type="PTM">
    <text evidence="1 2">This is a cyclic peptide.</text>
</comment>
<comment type="mass spectrometry"/>
<comment type="similarity">
    <text evidence="1">Belongs to the cyclotide family.</text>
</comment>
<comment type="caution">
    <text evidence="1">This peptide is cyclic. The start position was chosen by similarity to Oak1 (kalata B1) for which the DNA sequence is known.</text>
</comment>
<feature type="peptide" id="PRO_0000441784" description="Cyclotide psybry C" evidence="2">
    <location>
        <begin position="1"/>
        <end position="31"/>
    </location>
</feature>
<feature type="disulfide bond" evidence="1">
    <location>
        <begin position="5"/>
        <end position="20"/>
    </location>
</feature>
<feature type="disulfide bond" evidence="1">
    <location>
        <begin position="9"/>
        <end position="22"/>
    </location>
</feature>
<feature type="disulfide bond" evidence="1">
    <location>
        <begin position="15"/>
        <end position="28"/>
    </location>
</feature>
<feature type="cross-link" description="Cyclopeptide (Gly-Asn)" evidence="5">
    <location>
        <begin position="1"/>
        <end position="31"/>
    </location>
</feature>
<feature type="unsure residue" description="I or L" evidence="3">
    <location>
        <position position="11"/>
    </location>
</feature>
<feature type="unsure residue" description="I or L" evidence="3">
    <location>
        <position position="24"/>
    </location>
</feature>
<feature type="unsure residue" description="I or L" evidence="3">
    <location>
        <position position="27"/>
    </location>
</feature>
<accession>C0HL22</accession>
<name>CYPBC_PSYBR</name>
<protein>
    <recommendedName>
        <fullName evidence="3">Cyclotide psybry C</fullName>
    </recommendedName>
</protein>
<keyword id="KW-0903">Direct protein sequencing</keyword>
<keyword id="KW-1015">Disulfide bond</keyword>
<keyword id="KW-0960">Knottin</keyword>
<keyword id="KW-0611">Plant defense</keyword>
<reference evidence="4" key="1">
    <citation type="journal article" date="2016" name="J. Nat. Prod.">
        <title>Isolation and Characterization of Cyclotides from Brazilian Psychotria: Significance in Plant Defense and Co-occurrence with Antioxidant Alkaloids.</title>
        <authorList>
            <person name="Matsuura H.N."/>
            <person name="Poth A.G."/>
            <person name="Yendo A.C."/>
            <person name="Fett-Neto A.G."/>
            <person name="Craik D.J."/>
        </authorList>
    </citation>
    <scope>PROTEIN SEQUENCE</scope>
    <scope>MASS SPECTROMETRY</scope>
    <scope>IDENTIFICATION BY MASS SPECTROMETRY</scope>
    <scope>CYCLIZATION</scope>
    <source>
        <tissue evidence="3">Leaf</tissue>
    </source>
</reference>
<evidence type="ECO:0000255" key="1">
    <source>
        <dbReference type="PROSITE-ProRule" id="PRU00395"/>
    </source>
</evidence>
<evidence type="ECO:0000269" key="2">
    <source>
    </source>
</evidence>
<evidence type="ECO:0000303" key="3">
    <source>
    </source>
</evidence>
<evidence type="ECO:0000305" key="4"/>
<evidence type="ECO:0000305" key="5">
    <source>
    </source>
</evidence>
<sequence>GFNPCGETCQIDQTCHAPGCTCSIANICVRN</sequence>